<comment type="function">
    <text evidence="1">May function as a substrate receptor for CUL4-DDB1 E3 ubiquitin-protein ligase complex.</text>
</comment>
<comment type="pathway">
    <text>Protein modification; protein ubiquitination.</text>
</comment>
<comment type="subunit">
    <text evidence="1">Interacts with DDB1 and CUL4A.</text>
</comment>
<dbReference type="EMBL" id="BC087110">
    <property type="protein sequence ID" value="AAH87110.1"/>
    <property type="molecule type" value="mRNA"/>
</dbReference>
<dbReference type="EMBL" id="BC091364">
    <property type="protein sequence ID" value="AAH91364.1"/>
    <property type="molecule type" value="mRNA"/>
</dbReference>
<dbReference type="RefSeq" id="NP_001009686.1">
    <property type="nucleotide sequence ID" value="NM_001009686.2"/>
</dbReference>
<dbReference type="RefSeq" id="XP_006252033.1">
    <property type="nucleotide sequence ID" value="XM_006251971.5"/>
</dbReference>
<dbReference type="RefSeq" id="XP_017455174.1">
    <property type="nucleotide sequence ID" value="XM_017599685.3"/>
</dbReference>
<dbReference type="RefSeq" id="XP_038949226.1">
    <property type="nucleotide sequence ID" value="XM_039093298.2"/>
</dbReference>
<dbReference type="RefSeq" id="XP_038949227.1">
    <property type="nucleotide sequence ID" value="XM_039093299.2"/>
</dbReference>
<dbReference type="SMR" id="Q5M9G8"/>
<dbReference type="FunCoup" id="Q5M9G8">
    <property type="interactions" value="2215"/>
</dbReference>
<dbReference type="STRING" id="10116.ENSRNOP00000074435"/>
<dbReference type="GlyGen" id="Q5M9G8">
    <property type="glycosylation" value="1 site"/>
</dbReference>
<dbReference type="iPTMnet" id="Q5M9G8"/>
<dbReference type="PhosphoSitePlus" id="Q5M9G8"/>
<dbReference type="PaxDb" id="10116-ENSRNOP00000056736"/>
<dbReference type="Ensembl" id="ENSRNOT00000077584.2">
    <property type="protein sequence ID" value="ENSRNOP00000074435.1"/>
    <property type="gene ID" value="ENSRNOG00000018825.7"/>
</dbReference>
<dbReference type="GeneID" id="305895"/>
<dbReference type="KEGG" id="rno:305895"/>
<dbReference type="UCSC" id="RGD:1311288">
    <property type="organism name" value="rat"/>
</dbReference>
<dbReference type="AGR" id="RGD:1311288"/>
<dbReference type="CTD" id="80344"/>
<dbReference type="RGD" id="1311288">
    <property type="gene designation" value="Dcaf11"/>
</dbReference>
<dbReference type="eggNOG" id="KOG0266">
    <property type="taxonomic scope" value="Eukaryota"/>
</dbReference>
<dbReference type="GeneTree" id="ENSGT00720000108873"/>
<dbReference type="InParanoid" id="Q5M9G8"/>
<dbReference type="OMA" id="EHTFPQM"/>
<dbReference type="OrthoDB" id="63070at2759"/>
<dbReference type="PhylomeDB" id="Q5M9G8"/>
<dbReference type="TreeFam" id="TF314126"/>
<dbReference type="Reactome" id="R-RNO-8951664">
    <property type="pathway name" value="Neddylation"/>
</dbReference>
<dbReference type="UniPathway" id="UPA00143"/>
<dbReference type="PRO" id="PR:Q5M9G8"/>
<dbReference type="Proteomes" id="UP000002494">
    <property type="component" value="Chromosome 15"/>
</dbReference>
<dbReference type="Bgee" id="ENSRNOG00000018825">
    <property type="expression patterns" value="Expressed in heart and 19 other cell types or tissues"/>
</dbReference>
<dbReference type="GO" id="GO:0080008">
    <property type="term" value="C:Cul4-RING E3 ubiquitin ligase complex"/>
    <property type="evidence" value="ECO:0000250"/>
    <property type="project" value="UniProtKB"/>
</dbReference>
<dbReference type="GO" id="GO:0005654">
    <property type="term" value="C:nucleoplasm"/>
    <property type="evidence" value="ECO:0007669"/>
    <property type="project" value="Ensembl"/>
</dbReference>
<dbReference type="GO" id="GO:0050890">
    <property type="term" value="P:cognition"/>
    <property type="evidence" value="ECO:0000266"/>
    <property type="project" value="RGD"/>
</dbReference>
<dbReference type="GO" id="GO:0035640">
    <property type="term" value="P:exploration behavior"/>
    <property type="evidence" value="ECO:0000266"/>
    <property type="project" value="RGD"/>
</dbReference>
<dbReference type="GO" id="GO:0010467">
    <property type="term" value="P:gene expression"/>
    <property type="evidence" value="ECO:0000266"/>
    <property type="project" value="RGD"/>
</dbReference>
<dbReference type="GO" id="GO:0007613">
    <property type="term" value="P:memory"/>
    <property type="evidence" value="ECO:0000266"/>
    <property type="project" value="RGD"/>
</dbReference>
<dbReference type="GO" id="GO:0043161">
    <property type="term" value="P:proteasome-mediated ubiquitin-dependent protein catabolic process"/>
    <property type="evidence" value="ECO:0000318"/>
    <property type="project" value="GO_Central"/>
</dbReference>
<dbReference type="GO" id="GO:0050821">
    <property type="term" value="P:protein stabilization"/>
    <property type="evidence" value="ECO:0000266"/>
    <property type="project" value="RGD"/>
</dbReference>
<dbReference type="GO" id="GO:0016567">
    <property type="term" value="P:protein ubiquitination"/>
    <property type="evidence" value="ECO:0007669"/>
    <property type="project" value="UniProtKB-UniPathway"/>
</dbReference>
<dbReference type="GO" id="GO:0003016">
    <property type="term" value="P:respiratory system process"/>
    <property type="evidence" value="ECO:0000266"/>
    <property type="project" value="RGD"/>
</dbReference>
<dbReference type="GO" id="GO:0006979">
    <property type="term" value="P:response to oxidative stress"/>
    <property type="evidence" value="ECO:0000266"/>
    <property type="project" value="RGD"/>
</dbReference>
<dbReference type="FunFam" id="2.130.10.10:FF:002187">
    <property type="entry name" value="DDB1 and CUL4 associated factor 11"/>
    <property type="match status" value="1"/>
</dbReference>
<dbReference type="FunFam" id="2.130.10.10:FF:000115">
    <property type="entry name" value="DDB1- and CUL4-associated factor 11 isoform X1"/>
    <property type="match status" value="1"/>
</dbReference>
<dbReference type="Gene3D" id="2.130.10.10">
    <property type="entry name" value="YVTN repeat-like/Quinoprotein amine dehydrogenase"/>
    <property type="match status" value="2"/>
</dbReference>
<dbReference type="InterPro" id="IPR051859">
    <property type="entry name" value="DCAF"/>
</dbReference>
<dbReference type="InterPro" id="IPR017399">
    <property type="entry name" value="DCAF11/LEC14B"/>
</dbReference>
<dbReference type="InterPro" id="IPR020472">
    <property type="entry name" value="G-protein_beta_WD-40_rep"/>
</dbReference>
<dbReference type="InterPro" id="IPR015943">
    <property type="entry name" value="WD40/YVTN_repeat-like_dom_sf"/>
</dbReference>
<dbReference type="InterPro" id="IPR036322">
    <property type="entry name" value="WD40_repeat_dom_sf"/>
</dbReference>
<dbReference type="InterPro" id="IPR001680">
    <property type="entry name" value="WD40_rpt"/>
</dbReference>
<dbReference type="PANTHER" id="PTHR19847">
    <property type="entry name" value="DDB1- AND CUL4-ASSOCIATED FACTOR 11"/>
    <property type="match status" value="1"/>
</dbReference>
<dbReference type="PANTHER" id="PTHR19847:SF7">
    <property type="entry name" value="DDB1- AND CUL4-ASSOCIATED FACTOR 11"/>
    <property type="match status" value="1"/>
</dbReference>
<dbReference type="Pfam" id="PF00400">
    <property type="entry name" value="WD40"/>
    <property type="match status" value="4"/>
</dbReference>
<dbReference type="PIRSF" id="PIRSF038135">
    <property type="entry name" value="WD_repeat_p23"/>
    <property type="match status" value="1"/>
</dbReference>
<dbReference type="PRINTS" id="PR00320">
    <property type="entry name" value="GPROTEINBRPT"/>
</dbReference>
<dbReference type="SMART" id="SM00320">
    <property type="entry name" value="WD40"/>
    <property type="match status" value="7"/>
</dbReference>
<dbReference type="SUPFAM" id="SSF50978">
    <property type="entry name" value="WD40 repeat-like"/>
    <property type="match status" value="1"/>
</dbReference>
<dbReference type="PROSITE" id="PS50082">
    <property type="entry name" value="WD_REPEATS_2"/>
    <property type="match status" value="3"/>
</dbReference>
<dbReference type="PROSITE" id="PS50294">
    <property type="entry name" value="WD_REPEATS_REGION"/>
    <property type="match status" value="1"/>
</dbReference>
<proteinExistence type="evidence at protein level"/>
<keyword id="KW-0597">Phosphoprotein</keyword>
<keyword id="KW-1185">Reference proteome</keyword>
<keyword id="KW-0677">Repeat</keyword>
<keyword id="KW-0833">Ubl conjugation pathway</keyword>
<keyword id="KW-0853">WD repeat</keyword>
<sequence length="549" mass="61877">MGSRNSSSAGSGSLEPSEGLSRRGAGLRRSEEEEEEDEDVDLAQVLAYLLRRGQVRLVQGGGAANLQLIQALSDSEEEHDSAWDGRLGDRYNPPVDATPDTRELEYNEIKTRVELATGRLGLGRTAQEHSFPRMLHQRERGLCHRGSFSLGEQSRVMSHFLPNDLSFTDTYSQKAFCGIYSKDGQIFMSACQDQTIRLYDCRYGRFHKFKSIKARDVGWSVLDVAFTPDGNHFLYSSWSDYIHICSIYGEGDTHTALDLRPDERRFAVFSIAVSSDGREVLGGANDGCLYVFDREQNRRTLQIESHEDDVNAVAFADISSQILFSGGDDAICKVWDRRTMREDDPKPVGALAGHQDGITFIDSKGDARYLISNSKDQTIKLWDIRRFSSREGMEASRLAATQQNWDYRWQQVPKKAWKKLKLPGDSSLMTYRGHGVLHTLIRCRFSPAHSTGQQFIYSGCSTGKVVVYDLLSGHIVKKLTNHKACVRDVSWHPFEEKIVSSSWDGSLRLWQYRQAEYFQDDMTESDRNRVCSSGPAPVPCPSVAFSSPQ</sequence>
<name>DCA11_RAT</name>
<evidence type="ECO:0000250" key="1"/>
<evidence type="ECO:0000250" key="2">
    <source>
        <dbReference type="UniProtKB" id="Q91VU6"/>
    </source>
</evidence>
<evidence type="ECO:0000256" key="3">
    <source>
        <dbReference type="SAM" id="MobiDB-lite"/>
    </source>
</evidence>
<accession>Q5M9G8</accession>
<protein>
    <recommendedName>
        <fullName>DDB1- and CUL4-associated factor 11</fullName>
    </recommendedName>
    <alternativeName>
        <fullName>WD repeat-containing protein 23</fullName>
    </alternativeName>
</protein>
<gene>
    <name type="primary">Dcaf11</name>
    <name type="synonym">Wdr23</name>
</gene>
<reference key="1">
    <citation type="journal article" date="2004" name="Genome Res.">
        <title>The status, quality, and expansion of the NIH full-length cDNA project: the Mammalian Gene Collection (MGC).</title>
        <authorList>
            <consortium name="The MGC Project Team"/>
        </authorList>
    </citation>
    <scope>NUCLEOTIDE SEQUENCE [LARGE SCALE MRNA]</scope>
    <source>
        <tissue>Brain</tissue>
        <tissue>Heart</tissue>
    </source>
</reference>
<reference key="2">
    <citation type="journal article" date="2012" name="Nat. Commun.">
        <title>Quantitative maps of protein phosphorylation sites across 14 different rat organs and tissues.</title>
        <authorList>
            <person name="Lundby A."/>
            <person name="Secher A."/>
            <person name="Lage K."/>
            <person name="Nordsborg N.B."/>
            <person name="Dmytriyev A."/>
            <person name="Lundby C."/>
            <person name="Olsen J.V."/>
        </authorList>
    </citation>
    <scope>IDENTIFICATION BY MASS SPECTROMETRY [LARGE SCALE ANALYSIS]</scope>
</reference>
<feature type="chain" id="PRO_0000373804" description="DDB1- and CUL4-associated factor 11">
    <location>
        <begin position="1"/>
        <end position="549"/>
    </location>
</feature>
<feature type="repeat" description="WD 1">
    <location>
        <begin position="170"/>
        <end position="210"/>
    </location>
</feature>
<feature type="repeat" description="WD 2">
    <location>
        <begin position="216"/>
        <end position="258"/>
    </location>
</feature>
<feature type="repeat" description="WD 3">
    <location>
        <begin position="263"/>
        <end position="302"/>
    </location>
</feature>
<feature type="repeat" description="WD 4">
    <location>
        <begin position="305"/>
        <end position="345"/>
    </location>
</feature>
<feature type="repeat" description="WD 5">
    <location>
        <begin position="353"/>
        <end position="392"/>
    </location>
</feature>
<feature type="repeat" description="WD 6">
    <location>
        <begin position="435"/>
        <end position="480"/>
    </location>
</feature>
<feature type="repeat" description="WD 7">
    <location>
        <begin position="481"/>
        <end position="520"/>
    </location>
</feature>
<feature type="region of interest" description="Disordered" evidence="3">
    <location>
        <begin position="1"/>
        <end position="40"/>
    </location>
</feature>
<feature type="region of interest" description="Disordered" evidence="3">
    <location>
        <begin position="80"/>
        <end position="100"/>
    </location>
</feature>
<feature type="compositionally biased region" description="Low complexity" evidence="3">
    <location>
        <begin position="1"/>
        <end position="24"/>
    </location>
</feature>
<feature type="compositionally biased region" description="Basic and acidic residues" evidence="3">
    <location>
        <begin position="80"/>
        <end position="89"/>
    </location>
</feature>
<feature type="modified residue" description="Phosphoserine" evidence="2">
    <location>
        <position position="73"/>
    </location>
</feature>
<feature type="modified residue" description="Phosphoserine" evidence="2">
    <location>
        <position position="75"/>
    </location>
</feature>
<organism>
    <name type="scientific">Rattus norvegicus</name>
    <name type="common">Rat</name>
    <dbReference type="NCBI Taxonomy" id="10116"/>
    <lineage>
        <taxon>Eukaryota</taxon>
        <taxon>Metazoa</taxon>
        <taxon>Chordata</taxon>
        <taxon>Craniata</taxon>
        <taxon>Vertebrata</taxon>
        <taxon>Euteleostomi</taxon>
        <taxon>Mammalia</taxon>
        <taxon>Eutheria</taxon>
        <taxon>Euarchontoglires</taxon>
        <taxon>Glires</taxon>
        <taxon>Rodentia</taxon>
        <taxon>Myomorpha</taxon>
        <taxon>Muroidea</taxon>
        <taxon>Muridae</taxon>
        <taxon>Murinae</taxon>
        <taxon>Rattus</taxon>
    </lineage>
</organism>